<gene>
    <name type="primary">xynB</name>
    <name type="synonym">xylB</name>
</gene>
<evidence type="ECO:0000250" key="1"/>
<evidence type="ECO:0000255" key="2">
    <source>
        <dbReference type="PROSITE-ProRule" id="PRU10068"/>
    </source>
</evidence>
<evidence type="ECO:0000305" key="3"/>
<comment type="catalytic activity">
    <reaction>
        <text>Hydrolysis of (1-&gt;4)-beta-D-xylans, to remove successive D-xylose residues from the non-reducing termini.</text>
        <dbReference type="EC" id="3.2.1.37"/>
    </reaction>
</comment>
<comment type="similarity">
    <text evidence="3">Belongs to the glycosyl hydrolase 39 family.</text>
</comment>
<protein>
    <recommendedName>
        <fullName>Beta-xylosidase</fullName>
        <ecNumber>3.2.1.37</ecNumber>
    </recommendedName>
    <alternativeName>
        <fullName>1,4-beta-D-xylan xylohydrolase</fullName>
    </alternativeName>
    <alternativeName>
        <fullName>Xylan 1,4-beta-xylosidase</fullName>
    </alternativeName>
</protein>
<name>XYNB_THESW</name>
<feature type="chain" id="PRO_0000057690" description="Beta-xylosidase">
    <location>
        <begin position="1"/>
        <end position="500"/>
    </location>
</feature>
<feature type="active site" description="Proton donor" evidence="2">
    <location>
        <position position="160"/>
    </location>
</feature>
<feature type="active site" description="Nucleophile" evidence="1">
    <location>
        <position position="277"/>
    </location>
</feature>
<reference key="1">
    <citation type="submission" date="1997-05" db="EMBL/GenBank/DDBJ databases">
        <authorList>
            <person name="Lorenz W.W."/>
            <person name="Wiegel J."/>
        </authorList>
    </citation>
    <scope>NUCLEOTIDE SEQUENCE [GENOMIC DNA]</scope>
</reference>
<organism>
    <name type="scientific">Thermoanaerobacterium saccharolyticum (strain DSM 8691 / JW/SL-YS485)</name>
    <dbReference type="NCBI Taxonomy" id="1094508"/>
    <lineage>
        <taxon>Bacteria</taxon>
        <taxon>Bacillati</taxon>
        <taxon>Bacillota</taxon>
        <taxon>Clostridia</taxon>
        <taxon>Thermoanaerobacterales</taxon>
        <taxon>Thermoanaerobacteraceae</taxon>
        <taxon>Thermoanaerobacterium</taxon>
    </lineage>
</organism>
<keyword id="KW-0119">Carbohydrate metabolism</keyword>
<keyword id="KW-0326">Glycosidase</keyword>
<keyword id="KW-0378">Hydrolase</keyword>
<keyword id="KW-0624">Polysaccharide degradation</keyword>
<keyword id="KW-0858">Xylan degradation</keyword>
<dbReference type="EC" id="3.2.1.37"/>
<dbReference type="EMBL" id="AF001926">
    <property type="protein sequence ID" value="AAB68820.1"/>
    <property type="molecule type" value="Genomic_DNA"/>
</dbReference>
<dbReference type="SMR" id="O30360"/>
<dbReference type="STRING" id="1094508.Tsac_1452"/>
<dbReference type="CAZy" id="GH39">
    <property type="family name" value="Glycoside Hydrolase Family 39"/>
</dbReference>
<dbReference type="eggNOG" id="COG3664">
    <property type="taxonomic scope" value="Bacteria"/>
</dbReference>
<dbReference type="GO" id="GO:0009044">
    <property type="term" value="F:xylan 1,4-beta-xylosidase activity"/>
    <property type="evidence" value="ECO:0007669"/>
    <property type="project" value="UniProtKB-EC"/>
</dbReference>
<dbReference type="GO" id="GO:0045493">
    <property type="term" value="P:xylan catabolic process"/>
    <property type="evidence" value="ECO:0007669"/>
    <property type="project" value="UniProtKB-KW"/>
</dbReference>
<dbReference type="Gene3D" id="3.20.20.80">
    <property type="entry name" value="Glycosidases"/>
    <property type="match status" value="1"/>
</dbReference>
<dbReference type="Gene3D" id="2.60.40.1500">
    <property type="entry name" value="Glycosyl hydrolase domain, family 39"/>
    <property type="match status" value="1"/>
</dbReference>
<dbReference type="InterPro" id="IPR049165">
    <property type="entry name" value="GH39_as"/>
</dbReference>
<dbReference type="InterPro" id="IPR049166">
    <property type="entry name" value="GH39_cat"/>
</dbReference>
<dbReference type="InterPro" id="IPR000514">
    <property type="entry name" value="Glyco_hydro_39"/>
</dbReference>
<dbReference type="InterPro" id="IPR017853">
    <property type="entry name" value="Glycoside_hydrolase_SF"/>
</dbReference>
<dbReference type="InterPro" id="IPR051923">
    <property type="entry name" value="Glycosyl_Hydrolase_39"/>
</dbReference>
<dbReference type="PANTHER" id="PTHR12631">
    <property type="entry name" value="ALPHA-L-IDURONIDASE"/>
    <property type="match status" value="1"/>
</dbReference>
<dbReference type="PANTHER" id="PTHR12631:SF10">
    <property type="entry name" value="BETA-XYLOSIDASE-LIKE PROTEIN-RELATED"/>
    <property type="match status" value="1"/>
</dbReference>
<dbReference type="Pfam" id="PF01229">
    <property type="entry name" value="Glyco_hydro_39"/>
    <property type="match status" value="1"/>
</dbReference>
<dbReference type="PRINTS" id="PR00745">
    <property type="entry name" value="GLHYDRLASE39"/>
</dbReference>
<dbReference type="SUPFAM" id="SSF51445">
    <property type="entry name" value="(Trans)glycosidases"/>
    <property type="match status" value="1"/>
</dbReference>
<dbReference type="SUPFAM" id="SSF51011">
    <property type="entry name" value="Glycosyl hydrolase domain"/>
    <property type="match status" value="1"/>
</dbReference>
<dbReference type="PROSITE" id="PS01027">
    <property type="entry name" value="GLYCOSYL_HYDROL_F39"/>
    <property type="match status" value="1"/>
</dbReference>
<accession>O30360</accession>
<proteinExistence type="inferred from homology"/>
<sequence length="500" mass="58483">MIKVIVPDFSDKKFSDRWRYCVGTGRLGLALQKEYIDTLKYVKENIDFKYIRGHGLLCDDVGIYREDVVGDEIKPFYNFTYIDRIFDSFLEIGIRPFVEIGFMPKRLASGTQAVFYWEGNVTPPKDYKKWENLIKAVVSHFISRYGIDEVAKWPFEIWNEPNLKEFWKDADEKEYFKLYKITAKAIKEVNENIKVGGPAICGGADYWIEDFLNFCYEENVPVDFVSRHAYTSKQGEYTPHLIYQEIMPSEYMLNEFKTVRDIIKNSHFPNLPFHITEYNTSYSPQNPVHDTPFNAAYIARILSEGGDYVDSFSYWTFSDVFEERDVPRSQFHGGFGLVALNMVPKPTFYTFKFFNAMGEEMLYRDEHMIVTRRDDGSVALIAWNEVMDKTENPDKEYEVQIPVGFKDVFIKRQLIDEEHGNPWGTWIHMGRPRYPSKKEINTLREIAKPEIMTSHAVTNDGYLNLKFKLAKNAVVLYELTERIDESSTYIGLDDSKINGY</sequence>